<protein>
    <recommendedName>
        <fullName evidence="2">Anaerobic ribonucleoside-triphosphate reductase-activating protein</fullName>
        <ecNumber evidence="2">1.97.1.-</ecNumber>
    </recommendedName>
    <alternativeName>
        <fullName evidence="2">Class III anaerobic ribonucleotide reductase small component</fullName>
    </alternativeName>
</protein>
<gene>
    <name type="primary">nrdG</name>
    <name type="ordered locus">PM0941</name>
</gene>
<comment type="function">
    <text evidence="2">Activation of anaerobic ribonucleoside-triphosphate reductase under anaerobic conditions by generation of an organic free radical, using S-adenosylmethionine and reduced flavodoxin as cosubstrates to produce 5'-deoxy-adenosine.</text>
</comment>
<comment type="catalytic activity">
    <reaction evidence="2">
        <text>glycyl-[protein] + reduced [flavodoxin] + S-adenosyl-L-methionine = glycin-2-yl radical-[protein] + semiquinone [flavodoxin] + 5'-deoxyadenosine + L-methionine + H(+)</text>
        <dbReference type="Rhea" id="RHEA:61976"/>
        <dbReference type="Rhea" id="RHEA-COMP:10622"/>
        <dbReference type="Rhea" id="RHEA-COMP:14480"/>
        <dbReference type="Rhea" id="RHEA-COMP:15993"/>
        <dbReference type="Rhea" id="RHEA-COMP:15994"/>
        <dbReference type="ChEBI" id="CHEBI:15378"/>
        <dbReference type="ChEBI" id="CHEBI:17319"/>
        <dbReference type="ChEBI" id="CHEBI:29947"/>
        <dbReference type="ChEBI" id="CHEBI:32722"/>
        <dbReference type="ChEBI" id="CHEBI:57618"/>
        <dbReference type="ChEBI" id="CHEBI:57844"/>
        <dbReference type="ChEBI" id="CHEBI:59789"/>
        <dbReference type="ChEBI" id="CHEBI:140311"/>
    </reaction>
</comment>
<comment type="cofactor">
    <cofactor evidence="2">
        <name>[4Fe-4S] cluster</name>
        <dbReference type="ChEBI" id="CHEBI:49883"/>
    </cofactor>
    <text evidence="1">Binds 1 [4Fe-4S] cluster. The cluster is coordinated with 3 cysteines and an exchangeable S-adenosyl-L-methionine.</text>
</comment>
<comment type="subunit">
    <text evidence="2">Forms a tetramer composed of two NrdD and two NrdG subunits.</text>
</comment>
<comment type="subcellular location">
    <subcellularLocation>
        <location evidence="2">Cytoplasm</location>
    </subcellularLocation>
</comment>
<comment type="similarity">
    <text evidence="3">Belongs to the organic radical-activating enzymes family.</text>
</comment>
<keyword id="KW-0004">4Fe-4S</keyword>
<keyword id="KW-0963">Cytoplasm</keyword>
<keyword id="KW-0408">Iron</keyword>
<keyword id="KW-0411">Iron-sulfur</keyword>
<keyword id="KW-0479">Metal-binding</keyword>
<keyword id="KW-0560">Oxidoreductase</keyword>
<keyword id="KW-1185">Reference proteome</keyword>
<keyword id="KW-0949">S-adenosyl-L-methionine</keyword>
<name>NRDG_PASMU</name>
<reference key="1">
    <citation type="journal article" date="2001" name="Proc. Natl. Acad. Sci. U.S.A.">
        <title>Complete genomic sequence of Pasteurella multocida Pm70.</title>
        <authorList>
            <person name="May B.J."/>
            <person name="Zhang Q."/>
            <person name="Li L.L."/>
            <person name="Paustian M.L."/>
            <person name="Whittam T.S."/>
            <person name="Kapur V."/>
        </authorList>
    </citation>
    <scope>NUCLEOTIDE SEQUENCE [LARGE SCALE GENOMIC DNA]</scope>
    <source>
        <strain>Pm70</strain>
    </source>
</reference>
<feature type="chain" id="PRO_0000200538" description="Anaerobic ribonucleoside-triphosphate reductase-activating protein">
    <location>
        <begin position="1"/>
        <end position="158"/>
    </location>
</feature>
<feature type="binding site" evidence="1">
    <location>
        <position position="26"/>
    </location>
    <ligand>
        <name>[4Fe-4S] cluster</name>
        <dbReference type="ChEBI" id="CHEBI:49883"/>
        <note>4Fe-4S-S-AdoMet</note>
    </ligand>
</feature>
<feature type="binding site" evidence="1">
    <location>
        <position position="30"/>
    </location>
    <ligand>
        <name>[4Fe-4S] cluster</name>
        <dbReference type="ChEBI" id="CHEBI:49883"/>
        <note>4Fe-4S-S-AdoMet</note>
    </ligand>
</feature>
<feature type="binding site" evidence="1">
    <location>
        <begin position="32"/>
        <end position="34"/>
    </location>
    <ligand>
        <name>S-adenosyl-L-methionine</name>
        <dbReference type="ChEBI" id="CHEBI:59789"/>
    </ligand>
</feature>
<feature type="binding site" evidence="1">
    <location>
        <position position="33"/>
    </location>
    <ligand>
        <name>[4Fe-4S] cluster</name>
        <dbReference type="ChEBI" id="CHEBI:49883"/>
        <note>4Fe-4S-S-AdoMet</note>
    </ligand>
</feature>
<feature type="binding site" evidence="1">
    <location>
        <position position="74"/>
    </location>
    <ligand>
        <name>S-adenosyl-L-methionine</name>
        <dbReference type="ChEBI" id="CHEBI:59789"/>
    </ligand>
</feature>
<dbReference type="EC" id="1.97.1.-" evidence="2"/>
<dbReference type="EMBL" id="AE004439">
    <property type="protein sequence ID" value="AAK03025.1"/>
    <property type="molecule type" value="Genomic_DNA"/>
</dbReference>
<dbReference type="RefSeq" id="WP_010906934.1">
    <property type="nucleotide sequence ID" value="NC_002663.1"/>
</dbReference>
<dbReference type="SMR" id="Q9CM94"/>
<dbReference type="STRING" id="272843.PM0941"/>
<dbReference type="EnsemblBacteria" id="AAK03025">
    <property type="protein sequence ID" value="AAK03025"/>
    <property type="gene ID" value="PM0941"/>
</dbReference>
<dbReference type="KEGG" id="pmu:PM0941"/>
<dbReference type="HOGENOM" id="CLU_089926_2_1_6"/>
<dbReference type="OrthoDB" id="9782387at2"/>
<dbReference type="Proteomes" id="UP000000809">
    <property type="component" value="Chromosome"/>
</dbReference>
<dbReference type="GO" id="GO:0005737">
    <property type="term" value="C:cytoplasm"/>
    <property type="evidence" value="ECO:0007669"/>
    <property type="project" value="UniProtKB-SubCell"/>
</dbReference>
<dbReference type="GO" id="GO:0051539">
    <property type="term" value="F:4 iron, 4 sulfur cluster binding"/>
    <property type="evidence" value="ECO:0007669"/>
    <property type="project" value="UniProtKB-KW"/>
</dbReference>
<dbReference type="GO" id="GO:0043365">
    <property type="term" value="F:[formate-C-acetyltransferase]-activating enzyme activity"/>
    <property type="evidence" value="ECO:0007669"/>
    <property type="project" value="InterPro"/>
</dbReference>
<dbReference type="GO" id="GO:0046872">
    <property type="term" value="F:metal ion binding"/>
    <property type="evidence" value="ECO:0007669"/>
    <property type="project" value="UniProtKB-KW"/>
</dbReference>
<dbReference type="GO" id="GO:0004748">
    <property type="term" value="F:ribonucleoside-diphosphate reductase activity, thioredoxin disulfide as acceptor"/>
    <property type="evidence" value="ECO:0007669"/>
    <property type="project" value="TreeGrafter"/>
</dbReference>
<dbReference type="CDD" id="cd01335">
    <property type="entry name" value="Radical_SAM"/>
    <property type="match status" value="1"/>
</dbReference>
<dbReference type="Gene3D" id="3.20.20.70">
    <property type="entry name" value="Aldolase class I"/>
    <property type="match status" value="1"/>
</dbReference>
<dbReference type="InterPro" id="IPR013785">
    <property type="entry name" value="Aldolase_TIM"/>
</dbReference>
<dbReference type="InterPro" id="IPR012837">
    <property type="entry name" value="NrdG"/>
</dbReference>
<dbReference type="InterPro" id="IPR034457">
    <property type="entry name" value="Organic_radical-activating"/>
</dbReference>
<dbReference type="InterPro" id="IPR001989">
    <property type="entry name" value="Radical_activat_CS"/>
</dbReference>
<dbReference type="NCBIfam" id="TIGR02491">
    <property type="entry name" value="NrdG"/>
    <property type="match status" value="1"/>
</dbReference>
<dbReference type="NCBIfam" id="NF008335">
    <property type="entry name" value="PRK11121.1"/>
    <property type="match status" value="1"/>
</dbReference>
<dbReference type="PANTHER" id="PTHR30352:SF2">
    <property type="entry name" value="ANAEROBIC RIBONUCLEOSIDE-TRIPHOSPHATE REDUCTASE-ACTIVATING PROTEIN"/>
    <property type="match status" value="1"/>
</dbReference>
<dbReference type="PANTHER" id="PTHR30352">
    <property type="entry name" value="PYRUVATE FORMATE-LYASE-ACTIVATING ENZYME"/>
    <property type="match status" value="1"/>
</dbReference>
<dbReference type="Pfam" id="PF13353">
    <property type="entry name" value="Fer4_12"/>
    <property type="match status" value="1"/>
</dbReference>
<dbReference type="PIRSF" id="PIRSF000368">
    <property type="entry name" value="NrdG"/>
    <property type="match status" value="1"/>
</dbReference>
<dbReference type="SFLD" id="SFLDF00299">
    <property type="entry name" value="anaerobic_ribonucleoside-triph"/>
    <property type="match status" value="1"/>
</dbReference>
<dbReference type="SFLD" id="SFLDG01066">
    <property type="entry name" value="organic_radical-activating_enz"/>
    <property type="match status" value="1"/>
</dbReference>
<dbReference type="SUPFAM" id="SSF102114">
    <property type="entry name" value="Radical SAM enzymes"/>
    <property type="match status" value="1"/>
</dbReference>
<dbReference type="PROSITE" id="PS01087">
    <property type="entry name" value="RADICAL_ACTIVATING"/>
    <property type="match status" value="1"/>
</dbReference>
<proteinExistence type="inferred from homology"/>
<sequence>MNYVQYYPTDIVNGEGTRCTLFVSGCTHACRGCYNKKSWSFCAGLPFDEKMEAQILQDLKDTRIKRQGLTLTGGDPLHPRNLAVLLPFVKRVKHECPDKDLWVWTGYTLAELKADTLQRQILPYIDVLIDGKFEQDKADPSLVWRGSANQIIYRFTQY</sequence>
<evidence type="ECO:0000250" key="1">
    <source>
        <dbReference type="UniProtKB" id="P0A9N4"/>
    </source>
</evidence>
<evidence type="ECO:0000250" key="2">
    <source>
        <dbReference type="UniProtKB" id="P0A9N8"/>
    </source>
</evidence>
<evidence type="ECO:0000305" key="3"/>
<organism>
    <name type="scientific">Pasteurella multocida (strain Pm70)</name>
    <dbReference type="NCBI Taxonomy" id="272843"/>
    <lineage>
        <taxon>Bacteria</taxon>
        <taxon>Pseudomonadati</taxon>
        <taxon>Pseudomonadota</taxon>
        <taxon>Gammaproteobacteria</taxon>
        <taxon>Pasteurellales</taxon>
        <taxon>Pasteurellaceae</taxon>
        <taxon>Pasteurella</taxon>
    </lineage>
</organism>
<accession>Q9CM94</accession>